<organism>
    <name type="scientific">Shewanella pealeana (strain ATCC 700345 / ANG-SQ1)</name>
    <dbReference type="NCBI Taxonomy" id="398579"/>
    <lineage>
        <taxon>Bacteria</taxon>
        <taxon>Pseudomonadati</taxon>
        <taxon>Pseudomonadota</taxon>
        <taxon>Gammaproteobacteria</taxon>
        <taxon>Alteromonadales</taxon>
        <taxon>Shewanellaceae</taxon>
        <taxon>Shewanella</taxon>
    </lineage>
</organism>
<name>UBID_SHEPA</name>
<dbReference type="EC" id="4.1.1.98" evidence="1"/>
<dbReference type="EMBL" id="CP000851">
    <property type="protein sequence ID" value="ABV85849.1"/>
    <property type="molecule type" value="Genomic_DNA"/>
</dbReference>
<dbReference type="RefSeq" id="WP_012153787.1">
    <property type="nucleotide sequence ID" value="NC_009901.1"/>
</dbReference>
<dbReference type="SMR" id="A8GZW2"/>
<dbReference type="STRING" id="398579.Spea_0521"/>
<dbReference type="KEGG" id="spl:Spea_0521"/>
<dbReference type="eggNOG" id="COG0043">
    <property type="taxonomic scope" value="Bacteria"/>
</dbReference>
<dbReference type="HOGENOM" id="CLU_023348_4_1_6"/>
<dbReference type="OrthoDB" id="9809841at2"/>
<dbReference type="UniPathway" id="UPA00232"/>
<dbReference type="Proteomes" id="UP000002608">
    <property type="component" value="Chromosome"/>
</dbReference>
<dbReference type="GO" id="GO:0005829">
    <property type="term" value="C:cytosol"/>
    <property type="evidence" value="ECO:0007669"/>
    <property type="project" value="TreeGrafter"/>
</dbReference>
<dbReference type="GO" id="GO:0005886">
    <property type="term" value="C:plasma membrane"/>
    <property type="evidence" value="ECO:0007669"/>
    <property type="project" value="UniProtKB-SubCell"/>
</dbReference>
<dbReference type="GO" id="GO:0008694">
    <property type="term" value="F:3-octaprenyl-4-hydroxybenzoate carboxy-lyase activity"/>
    <property type="evidence" value="ECO:0007669"/>
    <property type="project" value="UniProtKB-UniRule"/>
</dbReference>
<dbReference type="GO" id="GO:0046872">
    <property type="term" value="F:metal ion binding"/>
    <property type="evidence" value="ECO:0007669"/>
    <property type="project" value="UniProtKB-KW"/>
</dbReference>
<dbReference type="GO" id="GO:0006744">
    <property type="term" value="P:ubiquinone biosynthetic process"/>
    <property type="evidence" value="ECO:0007669"/>
    <property type="project" value="UniProtKB-UniRule"/>
</dbReference>
<dbReference type="FunFam" id="1.20.5.570:FF:000001">
    <property type="entry name" value="3-octaprenyl-4-hydroxybenzoate carboxy-lyase"/>
    <property type="match status" value="1"/>
</dbReference>
<dbReference type="FunFam" id="3.40.1670.10:FF:000001">
    <property type="entry name" value="3-octaprenyl-4-hydroxybenzoate carboxy-lyase"/>
    <property type="match status" value="1"/>
</dbReference>
<dbReference type="Gene3D" id="1.20.5.570">
    <property type="entry name" value="Single helix bin"/>
    <property type="match status" value="1"/>
</dbReference>
<dbReference type="Gene3D" id="3.40.1670.10">
    <property type="entry name" value="UbiD C-terminal domain-like"/>
    <property type="match status" value="1"/>
</dbReference>
<dbReference type="HAMAP" id="MF_01636">
    <property type="entry name" value="UbiD"/>
    <property type="match status" value="1"/>
</dbReference>
<dbReference type="InterPro" id="IPR002830">
    <property type="entry name" value="UbiD"/>
</dbReference>
<dbReference type="InterPro" id="IPR049381">
    <property type="entry name" value="UbiD-like_C"/>
</dbReference>
<dbReference type="InterPro" id="IPR049383">
    <property type="entry name" value="UbiD-like_N"/>
</dbReference>
<dbReference type="InterPro" id="IPR023677">
    <property type="entry name" value="UbiD_bacteria"/>
</dbReference>
<dbReference type="InterPro" id="IPR048304">
    <property type="entry name" value="UbiD_Rift_dom"/>
</dbReference>
<dbReference type="NCBIfam" id="NF008175">
    <property type="entry name" value="PRK10922.1"/>
    <property type="match status" value="1"/>
</dbReference>
<dbReference type="NCBIfam" id="TIGR00148">
    <property type="entry name" value="UbiD family decarboxylase"/>
    <property type="match status" value="1"/>
</dbReference>
<dbReference type="PANTHER" id="PTHR30108">
    <property type="entry name" value="3-OCTAPRENYL-4-HYDROXYBENZOATE CARBOXY-LYASE-RELATED"/>
    <property type="match status" value="1"/>
</dbReference>
<dbReference type="PANTHER" id="PTHR30108:SF17">
    <property type="entry name" value="FERULIC ACID DECARBOXYLASE 1"/>
    <property type="match status" value="1"/>
</dbReference>
<dbReference type="Pfam" id="PF01977">
    <property type="entry name" value="UbiD"/>
    <property type="match status" value="1"/>
</dbReference>
<dbReference type="Pfam" id="PF20696">
    <property type="entry name" value="UbiD_C"/>
    <property type="match status" value="1"/>
</dbReference>
<dbReference type="Pfam" id="PF20695">
    <property type="entry name" value="UbiD_N"/>
    <property type="match status" value="1"/>
</dbReference>
<dbReference type="SUPFAM" id="SSF50475">
    <property type="entry name" value="FMN-binding split barrel"/>
    <property type="match status" value="1"/>
</dbReference>
<dbReference type="SUPFAM" id="SSF143968">
    <property type="entry name" value="UbiD C-terminal domain-like"/>
    <property type="match status" value="1"/>
</dbReference>
<feature type="chain" id="PRO_1000088193" description="3-octaprenyl-4-hydroxybenzoate carboxy-lyase">
    <location>
        <begin position="1"/>
        <end position="493"/>
    </location>
</feature>
<feature type="active site" description="Proton donor" evidence="1">
    <location>
        <position position="287"/>
    </location>
</feature>
<feature type="binding site" evidence="1">
    <location>
        <position position="172"/>
    </location>
    <ligand>
        <name>Mn(2+)</name>
        <dbReference type="ChEBI" id="CHEBI:29035"/>
    </ligand>
</feature>
<feature type="binding site" evidence="1">
    <location>
        <begin position="175"/>
        <end position="177"/>
    </location>
    <ligand>
        <name>prenylated FMN</name>
        <dbReference type="ChEBI" id="CHEBI:87746"/>
    </ligand>
</feature>
<feature type="binding site" evidence="1">
    <location>
        <begin position="189"/>
        <end position="191"/>
    </location>
    <ligand>
        <name>prenylated FMN</name>
        <dbReference type="ChEBI" id="CHEBI:87746"/>
    </ligand>
</feature>
<feature type="binding site" evidence="1">
    <location>
        <begin position="194"/>
        <end position="195"/>
    </location>
    <ligand>
        <name>prenylated FMN</name>
        <dbReference type="ChEBI" id="CHEBI:87746"/>
    </ligand>
</feature>
<feature type="binding site" evidence="1">
    <location>
        <position position="238"/>
    </location>
    <ligand>
        <name>Mn(2+)</name>
        <dbReference type="ChEBI" id="CHEBI:29035"/>
    </ligand>
</feature>
<comment type="function">
    <text evidence="1">Catalyzes the decarboxylation of 3-octaprenyl-4-hydroxy benzoate to 2-octaprenylphenol, an intermediate step in ubiquinone biosynthesis.</text>
</comment>
<comment type="catalytic activity">
    <reaction evidence="1">
        <text>a 4-hydroxy-3-(all-trans-polyprenyl)benzoate + H(+) = a 2-(all-trans-polyprenyl)phenol + CO2</text>
        <dbReference type="Rhea" id="RHEA:41680"/>
        <dbReference type="Rhea" id="RHEA-COMP:9514"/>
        <dbReference type="Rhea" id="RHEA-COMP:9516"/>
        <dbReference type="ChEBI" id="CHEBI:1269"/>
        <dbReference type="ChEBI" id="CHEBI:15378"/>
        <dbReference type="ChEBI" id="CHEBI:16526"/>
        <dbReference type="ChEBI" id="CHEBI:78396"/>
        <dbReference type="EC" id="4.1.1.98"/>
    </reaction>
</comment>
<comment type="cofactor">
    <cofactor evidence="1">
        <name>prenylated FMN</name>
        <dbReference type="ChEBI" id="CHEBI:87746"/>
    </cofactor>
    <text evidence="1">Binds 1 prenylated FMN per subunit.</text>
</comment>
<comment type="cofactor">
    <cofactor evidence="1">
        <name>Mn(2+)</name>
        <dbReference type="ChEBI" id="CHEBI:29035"/>
    </cofactor>
</comment>
<comment type="pathway">
    <text evidence="1">Cofactor biosynthesis; ubiquinone biosynthesis.</text>
</comment>
<comment type="subunit">
    <text evidence="1">Homohexamer.</text>
</comment>
<comment type="subcellular location">
    <subcellularLocation>
        <location evidence="1">Cell membrane</location>
        <topology evidence="1">Peripheral membrane protein</topology>
    </subcellularLocation>
</comment>
<comment type="similarity">
    <text evidence="1">Belongs to the UbiD family.</text>
</comment>
<reference key="1">
    <citation type="submission" date="2007-10" db="EMBL/GenBank/DDBJ databases">
        <title>Complete sequence of Shewanella pealeana ATCC 700345.</title>
        <authorList>
            <consortium name="US DOE Joint Genome Institute"/>
            <person name="Copeland A."/>
            <person name="Lucas S."/>
            <person name="Lapidus A."/>
            <person name="Barry K."/>
            <person name="Glavina del Rio T."/>
            <person name="Dalin E."/>
            <person name="Tice H."/>
            <person name="Pitluck S."/>
            <person name="Chertkov O."/>
            <person name="Brettin T."/>
            <person name="Bruce D."/>
            <person name="Detter J.C."/>
            <person name="Han C."/>
            <person name="Schmutz J."/>
            <person name="Larimer F."/>
            <person name="Land M."/>
            <person name="Hauser L."/>
            <person name="Kyrpides N."/>
            <person name="Kim E."/>
            <person name="Zhao J.-S.Z."/>
            <person name="Manno D."/>
            <person name="Hawari J."/>
            <person name="Richardson P."/>
        </authorList>
    </citation>
    <scope>NUCLEOTIDE SEQUENCE [LARGE SCALE GENOMIC DNA]</scope>
    <source>
        <strain>ATCC 700345 / ANG-SQ1</strain>
    </source>
</reference>
<proteinExistence type="inferred from homology"/>
<gene>
    <name evidence="1" type="primary">ubiD</name>
    <name type="ordered locus">Spea_0521</name>
</gene>
<accession>A8GZW2</accession>
<evidence type="ECO:0000255" key="1">
    <source>
        <dbReference type="HAMAP-Rule" id="MF_01636"/>
    </source>
</evidence>
<keyword id="KW-1003">Cell membrane</keyword>
<keyword id="KW-0210">Decarboxylase</keyword>
<keyword id="KW-0285">Flavoprotein</keyword>
<keyword id="KW-0288">FMN</keyword>
<keyword id="KW-0456">Lyase</keyword>
<keyword id="KW-0464">Manganese</keyword>
<keyword id="KW-0472">Membrane</keyword>
<keyword id="KW-0479">Metal-binding</keyword>
<keyword id="KW-1185">Reference proteome</keyword>
<keyword id="KW-0831">Ubiquinone biosynthesis</keyword>
<sequence length="493" mass="55508">MSFKDLRSFIDHLETNGELKRISHPVDPHLEMTEIADRVLRAKGPALLFENPVGNDMPVLANLFGTPKRVAMALGKEDPLALRDVGELLAFLKEPEPPRGFKDAISKIPMFKQALNMPPKTVRNPPCQQVVKTGDEVDLTKLPIQHCWPGDVAPLVTWGLTITKGPRQKRQNLGIYRQQLLGRDKLIMRWLDHRGGALDFKDFKEKHPGERYPVVVALGADPVTILGAVTPVPDAMSEYAFAGLLRGERTEVCKALSCDLEVPATSEIILEGYIDPDEMAEEGPYGDHTGYYNETDSFPVFTVTHITHRKDAIYHSTYTGRPPDEPAMLGVALNEVFVPILRKQYPEIIDFYLPPEGCSYRMAVISIRKQYPGHAKRVMMGAWSFLRQFMYTKFIVVVDEDVNCRDWNDVIWAITTRMDPKRDTVMIENTPIDYLDFASPVAGLGSKMGMDATNKWEGETDREWGTPIVMDEAVKQKVDAIWDDLGIDDAPTL</sequence>
<protein>
    <recommendedName>
        <fullName evidence="1">3-octaprenyl-4-hydroxybenzoate carboxy-lyase</fullName>
        <ecNumber evidence="1">4.1.1.98</ecNumber>
    </recommendedName>
    <alternativeName>
        <fullName evidence="1">Polyprenyl p-hydroxybenzoate decarboxylase</fullName>
    </alternativeName>
</protein>